<reference key="1">
    <citation type="journal article" date="2003" name="Proc. Natl. Acad. Sci. U.S.A.">
        <title>Complete genome sequence of Lactobacillus plantarum WCFS1.</title>
        <authorList>
            <person name="Kleerebezem M."/>
            <person name="Boekhorst J."/>
            <person name="van Kranenburg R."/>
            <person name="Molenaar D."/>
            <person name="Kuipers O.P."/>
            <person name="Leer R."/>
            <person name="Tarchini R."/>
            <person name="Peters S.A."/>
            <person name="Sandbrink H.M."/>
            <person name="Fiers M.W.E.J."/>
            <person name="Stiekema W."/>
            <person name="Klein Lankhorst R.M."/>
            <person name="Bron P.A."/>
            <person name="Hoffer S.M."/>
            <person name="Nierop Groot M.N."/>
            <person name="Kerkhoven R."/>
            <person name="De Vries M."/>
            <person name="Ursing B."/>
            <person name="De Vos W.M."/>
            <person name="Siezen R.J."/>
        </authorList>
    </citation>
    <scope>NUCLEOTIDE SEQUENCE [LARGE SCALE GENOMIC DNA]</scope>
    <source>
        <strain>ATCC BAA-793 / NCIMB 8826 / WCFS1</strain>
    </source>
</reference>
<reference key="2">
    <citation type="journal article" date="2012" name="J. Bacteriol.">
        <title>Complete resequencing and reannotation of the Lactobacillus plantarum WCFS1 genome.</title>
        <authorList>
            <person name="Siezen R.J."/>
            <person name="Francke C."/>
            <person name="Renckens B."/>
            <person name="Boekhorst J."/>
            <person name="Wels M."/>
            <person name="Kleerebezem M."/>
            <person name="van Hijum S.A."/>
        </authorList>
    </citation>
    <scope>NUCLEOTIDE SEQUENCE [LARGE SCALE GENOMIC DNA]</scope>
    <scope>GENOME REANNOTATION</scope>
    <source>
        <strain>ATCC BAA-793 / NCIMB 8826 / WCFS1</strain>
    </source>
</reference>
<protein>
    <recommendedName>
        <fullName evidence="1">Coproporphyrin III ferrochelatase</fullName>
        <ecNumber evidence="1">4.99.1.9</ecNumber>
    </recommendedName>
</protein>
<proteinExistence type="inferred from homology"/>
<comment type="function">
    <text evidence="1">Involved in coproporphyrin-dependent heme b biosynthesis. Catalyzes the insertion of ferrous iron into coproporphyrin III to form Fe-coproporphyrin III.</text>
</comment>
<comment type="catalytic activity">
    <reaction evidence="1">
        <text>Fe-coproporphyrin III + 2 H(+) = coproporphyrin III + Fe(2+)</text>
        <dbReference type="Rhea" id="RHEA:49572"/>
        <dbReference type="ChEBI" id="CHEBI:15378"/>
        <dbReference type="ChEBI" id="CHEBI:29033"/>
        <dbReference type="ChEBI" id="CHEBI:68438"/>
        <dbReference type="ChEBI" id="CHEBI:131725"/>
        <dbReference type="EC" id="4.99.1.9"/>
    </reaction>
    <physiologicalReaction direction="right-to-left" evidence="1">
        <dbReference type="Rhea" id="RHEA:49574"/>
    </physiologicalReaction>
</comment>
<comment type="pathway">
    <text evidence="1">Porphyrin-containing compound metabolism; protoheme biosynthesis.</text>
</comment>
<comment type="subcellular location">
    <subcellularLocation>
        <location evidence="1">Cytoplasm</location>
    </subcellularLocation>
</comment>
<comment type="similarity">
    <text evidence="1">Belongs to the ferrochelatase family.</text>
</comment>
<gene>
    <name evidence="1" type="primary">cpfC</name>
    <name type="ordered locus">lp_1296</name>
</gene>
<dbReference type="EC" id="4.99.1.9" evidence="1"/>
<dbReference type="EMBL" id="AL935263">
    <property type="protein sequence ID" value="CCC78664.1"/>
    <property type="molecule type" value="Genomic_DNA"/>
</dbReference>
<dbReference type="RefSeq" id="WP_011101341.1">
    <property type="nucleotide sequence ID" value="NC_004567.2"/>
</dbReference>
<dbReference type="RefSeq" id="YP_004889178.1">
    <property type="nucleotide sequence ID" value="NC_004567.2"/>
</dbReference>
<dbReference type="SMR" id="Q88XC3"/>
<dbReference type="STRING" id="220668.lp_1296"/>
<dbReference type="EnsemblBacteria" id="CCC78664">
    <property type="protein sequence ID" value="CCC78664"/>
    <property type="gene ID" value="lp_1296"/>
</dbReference>
<dbReference type="KEGG" id="lpl:lp_1296"/>
<dbReference type="PATRIC" id="fig|220668.9.peg.1096"/>
<dbReference type="eggNOG" id="COG0276">
    <property type="taxonomic scope" value="Bacteria"/>
</dbReference>
<dbReference type="HOGENOM" id="CLU_018884_0_0_9"/>
<dbReference type="OrthoDB" id="9809741at2"/>
<dbReference type="PhylomeDB" id="Q88XC3"/>
<dbReference type="UniPathway" id="UPA00252"/>
<dbReference type="Proteomes" id="UP000000432">
    <property type="component" value="Chromosome"/>
</dbReference>
<dbReference type="GO" id="GO:0005737">
    <property type="term" value="C:cytoplasm"/>
    <property type="evidence" value="ECO:0007669"/>
    <property type="project" value="UniProtKB-SubCell"/>
</dbReference>
<dbReference type="GO" id="GO:0004325">
    <property type="term" value="F:ferrochelatase activity"/>
    <property type="evidence" value="ECO:0007669"/>
    <property type="project" value="UniProtKB-UniRule"/>
</dbReference>
<dbReference type="GO" id="GO:0046872">
    <property type="term" value="F:metal ion binding"/>
    <property type="evidence" value="ECO:0007669"/>
    <property type="project" value="UniProtKB-KW"/>
</dbReference>
<dbReference type="GO" id="GO:0006783">
    <property type="term" value="P:heme biosynthetic process"/>
    <property type="evidence" value="ECO:0007669"/>
    <property type="project" value="UniProtKB-UniRule"/>
</dbReference>
<dbReference type="CDD" id="cd00419">
    <property type="entry name" value="Ferrochelatase_C"/>
    <property type="match status" value="1"/>
</dbReference>
<dbReference type="CDD" id="cd03411">
    <property type="entry name" value="Ferrochelatase_N"/>
    <property type="match status" value="1"/>
</dbReference>
<dbReference type="Gene3D" id="3.40.50.1400">
    <property type="match status" value="2"/>
</dbReference>
<dbReference type="HAMAP" id="MF_00323">
    <property type="entry name" value="Ferrochelatase"/>
    <property type="match status" value="1"/>
</dbReference>
<dbReference type="InterPro" id="IPR001015">
    <property type="entry name" value="Ferrochelatase"/>
</dbReference>
<dbReference type="InterPro" id="IPR019772">
    <property type="entry name" value="Ferrochelatase_AS"/>
</dbReference>
<dbReference type="InterPro" id="IPR033644">
    <property type="entry name" value="Ferrochelatase_C"/>
</dbReference>
<dbReference type="InterPro" id="IPR033659">
    <property type="entry name" value="Ferrochelatase_N"/>
</dbReference>
<dbReference type="NCBIfam" id="TIGR00109">
    <property type="entry name" value="hemH"/>
    <property type="match status" value="1"/>
</dbReference>
<dbReference type="PANTHER" id="PTHR11108">
    <property type="entry name" value="FERROCHELATASE"/>
    <property type="match status" value="1"/>
</dbReference>
<dbReference type="PANTHER" id="PTHR11108:SF1">
    <property type="entry name" value="FERROCHELATASE, MITOCHONDRIAL"/>
    <property type="match status" value="1"/>
</dbReference>
<dbReference type="Pfam" id="PF00762">
    <property type="entry name" value="Ferrochelatase"/>
    <property type="match status" value="1"/>
</dbReference>
<dbReference type="SUPFAM" id="SSF53800">
    <property type="entry name" value="Chelatase"/>
    <property type="match status" value="1"/>
</dbReference>
<dbReference type="PROSITE" id="PS00534">
    <property type="entry name" value="FERROCHELATASE"/>
    <property type="match status" value="1"/>
</dbReference>
<feature type="chain" id="PRO_0000175153" description="Coproporphyrin III ferrochelatase">
    <location>
        <begin position="1"/>
        <end position="324"/>
    </location>
</feature>
<feature type="binding site" evidence="1">
    <location>
        <position position="184"/>
    </location>
    <ligand>
        <name>Fe(2+)</name>
        <dbReference type="ChEBI" id="CHEBI:29033"/>
    </ligand>
</feature>
<feature type="binding site" evidence="1">
    <location>
        <position position="266"/>
    </location>
    <ligand>
        <name>Fe(2+)</name>
        <dbReference type="ChEBI" id="CHEBI:29033"/>
    </ligand>
</feature>
<sequence length="324" mass="36370">MHPGLLLVNLGSPASPRTKDVKAYLQEFLSDPSVIEMPAALWQPLLRGIILPTRSWRSATFYQDSWLPQGSPLIVYSQAICQQVQAALPDWNVRLAMTYGQPDIGATLKAMVADGCEKPIILPLFPQYTQSTHGGIHRQVEATGLPHTFIDSFYDQPTYIHLLATKVWQSYQAHHYDAVIFSYHSIPTAMVRHGDPYQRECEATTKAVLAERPELPADKVITAYQSKFGPMPWLKPYLKNELMQLVELGKRNVLVVTPSFVVDCLETLEEDYVQNYQTFRASGGDRFDLVPPMNKDTGFSQFLADLAIQKQEASNHAITSSSKS</sequence>
<name>CPFC_LACPL</name>
<evidence type="ECO:0000255" key="1">
    <source>
        <dbReference type="HAMAP-Rule" id="MF_00323"/>
    </source>
</evidence>
<keyword id="KW-0963">Cytoplasm</keyword>
<keyword id="KW-0350">Heme biosynthesis</keyword>
<keyword id="KW-0408">Iron</keyword>
<keyword id="KW-0456">Lyase</keyword>
<keyword id="KW-0479">Metal-binding</keyword>
<keyword id="KW-0627">Porphyrin biosynthesis</keyword>
<keyword id="KW-1185">Reference proteome</keyword>
<accession>Q88XC3</accession>
<accession>F9UN75</accession>
<organism>
    <name type="scientific">Lactiplantibacillus plantarum (strain ATCC BAA-793 / NCIMB 8826 / WCFS1)</name>
    <name type="common">Lactobacillus plantarum</name>
    <dbReference type="NCBI Taxonomy" id="220668"/>
    <lineage>
        <taxon>Bacteria</taxon>
        <taxon>Bacillati</taxon>
        <taxon>Bacillota</taxon>
        <taxon>Bacilli</taxon>
        <taxon>Lactobacillales</taxon>
        <taxon>Lactobacillaceae</taxon>
        <taxon>Lactiplantibacillus</taxon>
    </lineage>
</organism>